<reference key="1">
    <citation type="journal article" date="2013" name="Plant Physiol.">
        <title>A Nostoc punctiforme Sugar Transporter Necessary to Establish a Cyanobacterium-Plant Symbiosis.</title>
        <authorList>
            <person name="Ekman M."/>
            <person name="Picossi S."/>
            <person name="Campbell E.L."/>
            <person name="Meeks J.C."/>
            <person name="Flores E."/>
        </authorList>
    </citation>
    <scope>NUCLEOTIDE SEQUENCE [LARGE SCALE GENOMIC DNA]</scope>
    <source>
        <strain>ATCC 29133 / PCC 73102</strain>
    </source>
</reference>
<gene>
    <name evidence="1" type="primary">rimO</name>
    <name type="ordered locus">Npun_F4514</name>
</gene>
<feature type="chain" id="PRO_0000374906" description="Ribosomal protein uS12 methylthiotransferase RimO">
    <location>
        <begin position="1"/>
        <end position="439"/>
    </location>
</feature>
<feature type="domain" description="MTTase N-terminal" evidence="1">
    <location>
        <begin position="5"/>
        <end position="116"/>
    </location>
</feature>
<feature type="domain" description="Radical SAM core" evidence="2">
    <location>
        <begin position="140"/>
        <end position="369"/>
    </location>
</feature>
<feature type="domain" description="TRAM" evidence="1">
    <location>
        <begin position="372"/>
        <end position="438"/>
    </location>
</feature>
<feature type="binding site" evidence="1">
    <location>
        <position position="14"/>
    </location>
    <ligand>
        <name>[4Fe-4S] cluster</name>
        <dbReference type="ChEBI" id="CHEBI:49883"/>
        <label>1</label>
    </ligand>
</feature>
<feature type="binding site" evidence="1">
    <location>
        <position position="50"/>
    </location>
    <ligand>
        <name>[4Fe-4S] cluster</name>
        <dbReference type="ChEBI" id="CHEBI:49883"/>
        <label>1</label>
    </ligand>
</feature>
<feature type="binding site" evidence="1">
    <location>
        <position position="79"/>
    </location>
    <ligand>
        <name>[4Fe-4S] cluster</name>
        <dbReference type="ChEBI" id="CHEBI:49883"/>
        <label>1</label>
    </ligand>
</feature>
<feature type="binding site" evidence="1">
    <location>
        <position position="154"/>
    </location>
    <ligand>
        <name>[4Fe-4S] cluster</name>
        <dbReference type="ChEBI" id="CHEBI:49883"/>
        <label>2</label>
        <note>4Fe-4S-S-AdoMet</note>
    </ligand>
</feature>
<feature type="binding site" evidence="1">
    <location>
        <position position="158"/>
    </location>
    <ligand>
        <name>[4Fe-4S] cluster</name>
        <dbReference type="ChEBI" id="CHEBI:49883"/>
        <label>2</label>
        <note>4Fe-4S-S-AdoMet</note>
    </ligand>
</feature>
<feature type="binding site" evidence="1">
    <location>
        <position position="161"/>
    </location>
    <ligand>
        <name>[4Fe-4S] cluster</name>
        <dbReference type="ChEBI" id="CHEBI:49883"/>
        <label>2</label>
        <note>4Fe-4S-S-AdoMet</note>
    </ligand>
</feature>
<keyword id="KW-0004">4Fe-4S</keyword>
<keyword id="KW-0963">Cytoplasm</keyword>
<keyword id="KW-0408">Iron</keyword>
<keyword id="KW-0411">Iron-sulfur</keyword>
<keyword id="KW-0479">Metal-binding</keyword>
<keyword id="KW-1185">Reference proteome</keyword>
<keyword id="KW-0949">S-adenosyl-L-methionine</keyword>
<keyword id="KW-0808">Transferase</keyword>
<protein>
    <recommendedName>
        <fullName evidence="1">Ribosomal protein uS12 methylthiotransferase RimO</fullName>
        <shortName evidence="1">uS12 MTTase</shortName>
        <shortName evidence="1">uS12 methylthiotransferase</shortName>
        <ecNumber evidence="1">2.8.4.4</ecNumber>
    </recommendedName>
    <alternativeName>
        <fullName evidence="1">Ribosomal protein uS12 (aspartate-C(3))-methylthiotransferase</fullName>
    </alternativeName>
    <alternativeName>
        <fullName evidence="1">Ribosome maturation factor RimO</fullName>
    </alternativeName>
</protein>
<name>RIMO_NOSP7</name>
<accession>B2IVR7</accession>
<sequence length="439" mass="49226">MGDKPTIAISHLGCEKNRIDTEHMLGMLVEAGYGVDTNEELADYVIVNTCSFIEAARQESVRTLVELAEANKKIVITGCMAQHFQEQLLEELPEAVAVVGTGDYHKIVNVIERVELGERVKQVSIEPTYIADETTPRYRTTTEGVAYLRVAEGCDYRCAFCIIPHLRGNQRSRTIESIVAEAEQLVSQGVKEIILISQITTNYGLDIYGKPKLAELLRALGKVDIPWIRMHYAYPTGLTPDAIAAIQETPNVLPYLDLPLQHSHPDILRAMNRPWQGRVNDGIIDRIKTALPTAVLRTTFIVGFPGETQEHFEHLLEFVQRHEFDHVGVFTFSSEEGTPAYKLPNQLAQEVMDDRRYQLMELQQPISQKKNQQEVGKIVDVLIEQENPESGELIGRSGRFSPEVDGLVYVKGQAKLGTIVPVAIHHADTYDLYGQVVNN</sequence>
<proteinExistence type="inferred from homology"/>
<organism>
    <name type="scientific">Nostoc punctiforme (strain ATCC 29133 / PCC 73102)</name>
    <dbReference type="NCBI Taxonomy" id="63737"/>
    <lineage>
        <taxon>Bacteria</taxon>
        <taxon>Bacillati</taxon>
        <taxon>Cyanobacteriota</taxon>
        <taxon>Cyanophyceae</taxon>
        <taxon>Nostocales</taxon>
        <taxon>Nostocaceae</taxon>
        <taxon>Nostoc</taxon>
    </lineage>
</organism>
<comment type="function">
    <text evidence="1">Catalyzes the methylthiolation of an aspartic acid residue of ribosomal protein uS12.</text>
</comment>
<comment type="catalytic activity">
    <reaction evidence="1">
        <text>L-aspartate(89)-[ribosomal protein uS12]-hydrogen + (sulfur carrier)-SH + AH2 + 2 S-adenosyl-L-methionine = 3-methylsulfanyl-L-aspartate(89)-[ribosomal protein uS12]-hydrogen + (sulfur carrier)-H + 5'-deoxyadenosine + L-methionine + A + S-adenosyl-L-homocysteine + 2 H(+)</text>
        <dbReference type="Rhea" id="RHEA:37087"/>
        <dbReference type="Rhea" id="RHEA-COMP:10460"/>
        <dbReference type="Rhea" id="RHEA-COMP:10461"/>
        <dbReference type="Rhea" id="RHEA-COMP:14737"/>
        <dbReference type="Rhea" id="RHEA-COMP:14739"/>
        <dbReference type="ChEBI" id="CHEBI:13193"/>
        <dbReference type="ChEBI" id="CHEBI:15378"/>
        <dbReference type="ChEBI" id="CHEBI:17319"/>
        <dbReference type="ChEBI" id="CHEBI:17499"/>
        <dbReference type="ChEBI" id="CHEBI:29917"/>
        <dbReference type="ChEBI" id="CHEBI:29961"/>
        <dbReference type="ChEBI" id="CHEBI:57844"/>
        <dbReference type="ChEBI" id="CHEBI:57856"/>
        <dbReference type="ChEBI" id="CHEBI:59789"/>
        <dbReference type="ChEBI" id="CHEBI:64428"/>
        <dbReference type="ChEBI" id="CHEBI:73599"/>
        <dbReference type="EC" id="2.8.4.4"/>
    </reaction>
</comment>
<comment type="cofactor">
    <cofactor evidence="1">
        <name>[4Fe-4S] cluster</name>
        <dbReference type="ChEBI" id="CHEBI:49883"/>
    </cofactor>
    <text evidence="1">Binds 2 [4Fe-4S] clusters. One cluster is coordinated with 3 cysteines and an exchangeable S-adenosyl-L-methionine.</text>
</comment>
<comment type="subcellular location">
    <subcellularLocation>
        <location evidence="1">Cytoplasm</location>
    </subcellularLocation>
</comment>
<comment type="similarity">
    <text evidence="1">Belongs to the methylthiotransferase family. RimO subfamily.</text>
</comment>
<dbReference type="EC" id="2.8.4.4" evidence="1"/>
<dbReference type="EMBL" id="CP001037">
    <property type="protein sequence ID" value="ACC82880.1"/>
    <property type="molecule type" value="Genomic_DNA"/>
</dbReference>
<dbReference type="RefSeq" id="WP_012410841.1">
    <property type="nucleotide sequence ID" value="NC_010628.1"/>
</dbReference>
<dbReference type="SMR" id="B2IVR7"/>
<dbReference type="STRING" id="63737.Npun_F4514"/>
<dbReference type="EnsemblBacteria" id="ACC82880">
    <property type="protein sequence ID" value="ACC82880"/>
    <property type="gene ID" value="Npun_F4514"/>
</dbReference>
<dbReference type="KEGG" id="npu:Npun_F4514"/>
<dbReference type="eggNOG" id="COG0621">
    <property type="taxonomic scope" value="Bacteria"/>
</dbReference>
<dbReference type="HOGENOM" id="CLU_018697_0_1_3"/>
<dbReference type="OrthoDB" id="9805215at2"/>
<dbReference type="PhylomeDB" id="B2IVR7"/>
<dbReference type="Proteomes" id="UP000001191">
    <property type="component" value="Chromosome"/>
</dbReference>
<dbReference type="GO" id="GO:0005829">
    <property type="term" value="C:cytosol"/>
    <property type="evidence" value="ECO:0007669"/>
    <property type="project" value="TreeGrafter"/>
</dbReference>
<dbReference type="GO" id="GO:0051539">
    <property type="term" value="F:4 iron, 4 sulfur cluster binding"/>
    <property type="evidence" value="ECO:0007669"/>
    <property type="project" value="UniProtKB-UniRule"/>
</dbReference>
<dbReference type="GO" id="GO:0035599">
    <property type="term" value="F:aspartic acid methylthiotransferase activity"/>
    <property type="evidence" value="ECO:0007669"/>
    <property type="project" value="TreeGrafter"/>
</dbReference>
<dbReference type="GO" id="GO:0046872">
    <property type="term" value="F:metal ion binding"/>
    <property type="evidence" value="ECO:0007669"/>
    <property type="project" value="UniProtKB-KW"/>
</dbReference>
<dbReference type="GO" id="GO:0103039">
    <property type="term" value="F:protein methylthiotransferase activity"/>
    <property type="evidence" value="ECO:0007669"/>
    <property type="project" value="UniProtKB-EC"/>
</dbReference>
<dbReference type="GO" id="GO:0006400">
    <property type="term" value="P:tRNA modification"/>
    <property type="evidence" value="ECO:0007669"/>
    <property type="project" value="InterPro"/>
</dbReference>
<dbReference type="CDD" id="cd01335">
    <property type="entry name" value="Radical_SAM"/>
    <property type="match status" value="1"/>
</dbReference>
<dbReference type="FunFam" id="3.40.50.12160:FF:000002">
    <property type="entry name" value="Ribosomal protein S12 methylthiotransferase RimO"/>
    <property type="match status" value="1"/>
</dbReference>
<dbReference type="FunFam" id="3.80.30.20:FF:000001">
    <property type="entry name" value="tRNA-2-methylthio-N(6)-dimethylallyladenosine synthase 2"/>
    <property type="match status" value="1"/>
</dbReference>
<dbReference type="Gene3D" id="3.40.50.12160">
    <property type="entry name" value="Methylthiotransferase, N-terminal domain"/>
    <property type="match status" value="1"/>
</dbReference>
<dbReference type="Gene3D" id="2.40.50.140">
    <property type="entry name" value="Nucleic acid-binding proteins"/>
    <property type="match status" value="1"/>
</dbReference>
<dbReference type="Gene3D" id="3.80.30.20">
    <property type="entry name" value="tm_1862 like domain"/>
    <property type="match status" value="1"/>
</dbReference>
<dbReference type="HAMAP" id="MF_01865">
    <property type="entry name" value="MTTase_RimO"/>
    <property type="match status" value="1"/>
</dbReference>
<dbReference type="InterPro" id="IPR006638">
    <property type="entry name" value="Elp3/MiaA/NifB-like_rSAM"/>
</dbReference>
<dbReference type="InterPro" id="IPR005839">
    <property type="entry name" value="Methylthiotransferase"/>
</dbReference>
<dbReference type="InterPro" id="IPR020612">
    <property type="entry name" value="Methylthiotransferase_CS"/>
</dbReference>
<dbReference type="InterPro" id="IPR013848">
    <property type="entry name" value="Methylthiotransferase_N"/>
</dbReference>
<dbReference type="InterPro" id="IPR038135">
    <property type="entry name" value="Methylthiotransferase_N_sf"/>
</dbReference>
<dbReference type="InterPro" id="IPR012340">
    <property type="entry name" value="NA-bd_OB-fold"/>
</dbReference>
<dbReference type="InterPro" id="IPR005840">
    <property type="entry name" value="Ribosomal_uS12_MeSTrfase_RimO"/>
</dbReference>
<dbReference type="InterPro" id="IPR007197">
    <property type="entry name" value="rSAM"/>
</dbReference>
<dbReference type="InterPro" id="IPR023404">
    <property type="entry name" value="rSAM_horseshoe"/>
</dbReference>
<dbReference type="InterPro" id="IPR002792">
    <property type="entry name" value="TRAM_dom"/>
</dbReference>
<dbReference type="NCBIfam" id="TIGR01125">
    <property type="entry name" value="30S ribosomal protein S12 methylthiotransferase RimO"/>
    <property type="match status" value="1"/>
</dbReference>
<dbReference type="NCBIfam" id="TIGR00089">
    <property type="entry name" value="MiaB/RimO family radical SAM methylthiotransferase"/>
    <property type="match status" value="1"/>
</dbReference>
<dbReference type="PANTHER" id="PTHR43837">
    <property type="entry name" value="RIBOSOMAL PROTEIN S12 METHYLTHIOTRANSFERASE RIMO"/>
    <property type="match status" value="1"/>
</dbReference>
<dbReference type="PANTHER" id="PTHR43837:SF1">
    <property type="entry name" value="RIBOSOMAL PROTEIN US12 METHYLTHIOTRANSFERASE RIMO"/>
    <property type="match status" value="1"/>
</dbReference>
<dbReference type="Pfam" id="PF04055">
    <property type="entry name" value="Radical_SAM"/>
    <property type="match status" value="1"/>
</dbReference>
<dbReference type="Pfam" id="PF18693">
    <property type="entry name" value="TRAM_2"/>
    <property type="match status" value="1"/>
</dbReference>
<dbReference type="Pfam" id="PF00919">
    <property type="entry name" value="UPF0004"/>
    <property type="match status" value="1"/>
</dbReference>
<dbReference type="SFLD" id="SFLDG01082">
    <property type="entry name" value="B12-binding_domain_containing"/>
    <property type="match status" value="1"/>
</dbReference>
<dbReference type="SFLD" id="SFLDS00029">
    <property type="entry name" value="Radical_SAM"/>
    <property type="match status" value="1"/>
</dbReference>
<dbReference type="SFLD" id="SFLDF00274">
    <property type="entry name" value="ribosomal_protein_S12_methylth"/>
    <property type="match status" value="1"/>
</dbReference>
<dbReference type="SMART" id="SM00729">
    <property type="entry name" value="Elp3"/>
    <property type="match status" value="1"/>
</dbReference>
<dbReference type="SUPFAM" id="SSF102114">
    <property type="entry name" value="Radical SAM enzymes"/>
    <property type="match status" value="1"/>
</dbReference>
<dbReference type="PROSITE" id="PS51449">
    <property type="entry name" value="MTTASE_N"/>
    <property type="match status" value="1"/>
</dbReference>
<dbReference type="PROSITE" id="PS01278">
    <property type="entry name" value="MTTASE_RADICAL"/>
    <property type="match status" value="1"/>
</dbReference>
<dbReference type="PROSITE" id="PS51918">
    <property type="entry name" value="RADICAL_SAM"/>
    <property type="match status" value="1"/>
</dbReference>
<dbReference type="PROSITE" id="PS50926">
    <property type="entry name" value="TRAM"/>
    <property type="match status" value="1"/>
</dbReference>
<evidence type="ECO:0000255" key="1">
    <source>
        <dbReference type="HAMAP-Rule" id="MF_01865"/>
    </source>
</evidence>
<evidence type="ECO:0000255" key="2">
    <source>
        <dbReference type="PROSITE-ProRule" id="PRU01266"/>
    </source>
</evidence>